<protein>
    <recommendedName>
        <fullName>Uncharacterized protein YPR160W-A</fullName>
    </recommendedName>
</protein>
<keyword id="KW-1185">Reference proteome</keyword>
<name>YP60A_YEAST</name>
<feature type="chain" id="PRO_0000309069" description="Uncharacterized protein YPR160W-A">
    <location>
        <begin position="1"/>
        <end position="26"/>
    </location>
</feature>
<dbReference type="EMBL" id="U28371">
    <property type="status" value="NOT_ANNOTATED_CDS"/>
    <property type="molecule type" value="Genomic_DNA"/>
</dbReference>
<dbReference type="EMBL" id="BK006949">
    <property type="status" value="NOT_ANNOTATED_CDS"/>
    <property type="molecule type" value="Genomic_DNA"/>
</dbReference>
<dbReference type="STRING" id="4932.YPR160W-A"/>
<dbReference type="iPTMnet" id="P0C5S1"/>
<dbReference type="PaxDb" id="4932-YPR160W-A"/>
<dbReference type="EnsemblFungi" id="YPR160W-A_mRNA">
    <property type="protein sequence ID" value="YPR160W-A"/>
    <property type="gene ID" value="YPR160W-A"/>
</dbReference>
<dbReference type="AGR" id="SGD:S000028860"/>
<dbReference type="SGD" id="S000028860">
    <property type="gene designation" value="YPR160W-A"/>
</dbReference>
<dbReference type="HOGENOM" id="CLU_3417334_0_0_1"/>
<dbReference type="InParanoid" id="P0C5S1"/>
<dbReference type="PRO" id="PR:P0C5S1"/>
<dbReference type="Proteomes" id="UP000002311">
    <property type="component" value="Chromosome XVI"/>
</dbReference>
<proteinExistence type="evidence at protein level"/>
<accession>P0C5S1</accession>
<organism>
    <name type="scientific">Saccharomyces cerevisiae (strain ATCC 204508 / S288c)</name>
    <name type="common">Baker's yeast</name>
    <dbReference type="NCBI Taxonomy" id="559292"/>
    <lineage>
        <taxon>Eukaryota</taxon>
        <taxon>Fungi</taxon>
        <taxon>Dikarya</taxon>
        <taxon>Ascomycota</taxon>
        <taxon>Saccharomycotina</taxon>
        <taxon>Saccharomycetes</taxon>
        <taxon>Saccharomycetales</taxon>
        <taxon>Saccharomycetaceae</taxon>
        <taxon>Saccharomyces</taxon>
    </lineage>
</organism>
<reference key="1">
    <citation type="journal article" date="1997" name="Nature">
        <title>The nucleotide sequence of Saccharomyces cerevisiae chromosome XVI.</title>
        <authorList>
            <person name="Bussey H."/>
            <person name="Storms R.K."/>
            <person name="Ahmed A."/>
            <person name="Albermann K."/>
            <person name="Allen E."/>
            <person name="Ansorge W."/>
            <person name="Araujo R."/>
            <person name="Aparicio A."/>
            <person name="Barrell B.G."/>
            <person name="Badcock K."/>
            <person name="Benes V."/>
            <person name="Botstein D."/>
            <person name="Bowman S."/>
            <person name="Brueckner M."/>
            <person name="Carpenter J."/>
            <person name="Cherry J.M."/>
            <person name="Chung E."/>
            <person name="Churcher C.M."/>
            <person name="Coster F."/>
            <person name="Davis K."/>
            <person name="Davis R.W."/>
            <person name="Dietrich F.S."/>
            <person name="Delius H."/>
            <person name="DiPaolo T."/>
            <person name="Dubois E."/>
            <person name="Duesterhoeft A."/>
            <person name="Duncan M."/>
            <person name="Floeth M."/>
            <person name="Fortin N."/>
            <person name="Friesen J.D."/>
            <person name="Fritz C."/>
            <person name="Goffeau A."/>
            <person name="Hall J."/>
            <person name="Hebling U."/>
            <person name="Heumann K."/>
            <person name="Hilbert H."/>
            <person name="Hillier L.W."/>
            <person name="Hunicke-Smith S."/>
            <person name="Hyman R.W."/>
            <person name="Johnston M."/>
            <person name="Kalman S."/>
            <person name="Kleine K."/>
            <person name="Komp C."/>
            <person name="Kurdi O."/>
            <person name="Lashkari D."/>
            <person name="Lew H."/>
            <person name="Lin A."/>
            <person name="Lin D."/>
            <person name="Louis E.J."/>
            <person name="Marathe R."/>
            <person name="Messenguy F."/>
            <person name="Mewes H.-W."/>
            <person name="Mirtipati S."/>
            <person name="Moestl D."/>
            <person name="Mueller-Auer S."/>
            <person name="Namath A."/>
            <person name="Nentwich U."/>
            <person name="Oefner P."/>
            <person name="Pearson D."/>
            <person name="Petel F.X."/>
            <person name="Pohl T.M."/>
            <person name="Purnelle B."/>
            <person name="Rajandream M.A."/>
            <person name="Rechmann S."/>
            <person name="Rieger M."/>
            <person name="Riles L."/>
            <person name="Roberts D."/>
            <person name="Schaefer M."/>
            <person name="Scharfe M."/>
            <person name="Scherens B."/>
            <person name="Schramm S."/>
            <person name="Schroeder M."/>
            <person name="Sdicu A.-M."/>
            <person name="Tettelin H."/>
            <person name="Urrestarazu L.A."/>
            <person name="Ushinsky S."/>
            <person name="Vierendeels F."/>
            <person name="Vissers S."/>
            <person name="Voss H."/>
            <person name="Walsh S.V."/>
            <person name="Wambutt R."/>
            <person name="Wang Y."/>
            <person name="Wedler E."/>
            <person name="Wedler H."/>
            <person name="Winnett E."/>
            <person name="Zhong W.-W."/>
            <person name="Zollner A."/>
            <person name="Vo D.H."/>
            <person name="Hani J."/>
        </authorList>
    </citation>
    <scope>NUCLEOTIDE SEQUENCE [LARGE SCALE GENOMIC DNA]</scope>
    <source>
        <strain>ATCC 204508 / S288c</strain>
    </source>
</reference>
<reference key="2">
    <citation type="journal article" date="2014" name="G3 (Bethesda)">
        <title>The reference genome sequence of Saccharomyces cerevisiae: Then and now.</title>
        <authorList>
            <person name="Engel S.R."/>
            <person name="Dietrich F.S."/>
            <person name="Fisk D.G."/>
            <person name="Binkley G."/>
            <person name="Balakrishnan R."/>
            <person name="Costanzo M.C."/>
            <person name="Dwight S.S."/>
            <person name="Hitz B.C."/>
            <person name="Karra K."/>
            <person name="Nash R.S."/>
            <person name="Weng S."/>
            <person name="Wong E.D."/>
            <person name="Lloyd P."/>
            <person name="Skrzypek M.S."/>
            <person name="Miyasato S.R."/>
            <person name="Simison M."/>
            <person name="Cherry J.M."/>
        </authorList>
    </citation>
    <scope>GENOME REANNOTATION</scope>
    <source>
        <strain>ATCC 204508 / S288c</strain>
    </source>
</reference>
<reference key="3">
    <citation type="journal article" date="2002" name="Genome Res.">
        <title>Parallel identification of new genes in Saccharomyces cerevisiae.</title>
        <authorList>
            <person name="Oshiro G."/>
            <person name="Wodicka L.M."/>
            <person name="Washburn M.P."/>
            <person name="Yates J.R. III"/>
            <person name="Lockhart D.J."/>
            <person name="Winzeler E.A."/>
        </authorList>
    </citation>
    <scope>IDENTIFICATION BY MASS SPECTROMETRY</scope>
</reference>
<gene>
    <name type="ordered locus">YPR160W-A</name>
</gene>
<sequence length="26" mass="3068">MVYVMSMVSLLKRLLTVTRWKLQITG</sequence>